<sequence>MTLLTVKHLTITDTWTDQPLVSDVNFTLTKGETLGVIGESGSGKSITCKSIIGLNPERLGVTGEIIFDGTSMLSLSESQRKKYRGKDIAMVMQQGSRAFDPSTTVGKQMFETMKVHTSMSTQEIEKTLIEYMDYLSLKDPKRILKSYPYMLSGGMLQRLMIALALALKPKLIIADEPTTALDTITQYDVLEAFIDIKKHFDCAMIFISHDLTVINKIADRVVVMKNGQLIEHGTRESVLHHPEHVYTKYLLSTKKKINDHFKHVMRGDVHD</sequence>
<accession>A0A0H3JXA3</accession>
<organism>
    <name type="scientific">Staphylococcus aureus (strain Mu50 / ATCC 700699)</name>
    <dbReference type="NCBI Taxonomy" id="158878"/>
    <lineage>
        <taxon>Bacteria</taxon>
        <taxon>Bacillati</taxon>
        <taxon>Bacillota</taxon>
        <taxon>Bacilli</taxon>
        <taxon>Bacillales</taxon>
        <taxon>Staphylococcaceae</taxon>
        <taxon>Staphylococcus</taxon>
    </lineage>
</organism>
<comment type="function">
    <text evidence="2">Part of the ABC transporter complex CntABCDF (Opp1) involved in the uptake of metal in complex with the metallophore staphylopine (StP). May be involved in the import of a large array of divalent metals ions such as nickel, cobalt, zinc, copper and iron. Probably responsible for energy coupling to the transport system.</text>
</comment>
<comment type="subunit">
    <text evidence="5">The complex is composed of two ATP-binding proteins (CntD and CntF), two transmembrane proteins (CntB and CntC) and a solute-binding protein (CntA).</text>
</comment>
<comment type="subcellular location">
    <subcellularLocation>
        <location evidence="4">Cell membrane</location>
        <topology evidence="4">Peripheral membrane protein</topology>
    </subcellularLocation>
</comment>
<comment type="induction">
    <text evidence="2">Up-regulated in metal-poor media.</text>
</comment>
<comment type="disruption phenotype">
    <text evidence="2">Deletion of the cntABCDF genes decreases StP intracellular levels and decreases the import of iron, zinc, nickel and cobalt.</text>
</comment>
<comment type="similarity">
    <text evidence="4">Belongs to the ABC transporter superfamily.</text>
</comment>
<name>CNTD_STAAM</name>
<proteinExistence type="evidence at protein level"/>
<evidence type="ECO:0000255" key="1">
    <source>
        <dbReference type="PROSITE-ProRule" id="PRU00434"/>
    </source>
</evidence>
<evidence type="ECO:0000269" key="2">
    <source>
    </source>
</evidence>
<evidence type="ECO:0000303" key="3">
    <source>
    </source>
</evidence>
<evidence type="ECO:0000305" key="4"/>
<evidence type="ECO:0000305" key="5">
    <source>
    </source>
</evidence>
<evidence type="ECO:0000312" key="6">
    <source>
        <dbReference type="EMBL" id="BAB58626.1"/>
    </source>
</evidence>
<protein>
    <recommendedName>
        <fullName evidence="4">Metal-staphylopine import system ATP-binding protein CntD</fullName>
        <ecNumber evidence="5">7.2.2.-</ecNumber>
    </recommendedName>
</protein>
<feature type="chain" id="PRO_0000447276" description="Metal-staphylopine import system ATP-binding protein CntD">
    <location>
        <begin position="1"/>
        <end position="271"/>
    </location>
</feature>
<feature type="domain" description="ABC transporter" evidence="1">
    <location>
        <begin position="6"/>
        <end position="251"/>
    </location>
</feature>
<feature type="binding site" evidence="1">
    <location>
        <begin position="38"/>
        <end position="45"/>
    </location>
    <ligand>
        <name>ATP</name>
        <dbReference type="ChEBI" id="CHEBI:30616"/>
    </ligand>
</feature>
<reference key="1">
    <citation type="journal article" date="2001" name="Lancet">
        <title>Whole genome sequencing of meticillin-resistant Staphylococcus aureus.</title>
        <authorList>
            <person name="Kuroda M."/>
            <person name="Ohta T."/>
            <person name="Uchiyama I."/>
            <person name="Baba T."/>
            <person name="Yuzawa H."/>
            <person name="Kobayashi I."/>
            <person name="Cui L."/>
            <person name="Oguchi A."/>
            <person name="Aoki K."/>
            <person name="Nagai Y."/>
            <person name="Lian J.-Q."/>
            <person name="Ito T."/>
            <person name="Kanamori M."/>
            <person name="Matsumaru H."/>
            <person name="Maruyama A."/>
            <person name="Murakami H."/>
            <person name="Hosoyama A."/>
            <person name="Mizutani-Ui Y."/>
            <person name="Takahashi N.K."/>
            <person name="Sawano T."/>
            <person name="Inoue R."/>
            <person name="Kaito C."/>
            <person name="Sekimizu K."/>
            <person name="Hirakawa H."/>
            <person name="Kuhara S."/>
            <person name="Goto S."/>
            <person name="Yabuzaki J."/>
            <person name="Kanehisa M."/>
            <person name="Yamashita A."/>
            <person name="Oshima K."/>
            <person name="Furuya K."/>
            <person name="Yoshino C."/>
            <person name="Shiba T."/>
            <person name="Hattori M."/>
            <person name="Ogasawara N."/>
            <person name="Hayashi H."/>
            <person name="Hiramatsu K."/>
        </authorList>
    </citation>
    <scope>NUCLEOTIDE SEQUENCE [LARGE SCALE GENOMIC DNA]</scope>
    <source>
        <strain>Mu50 / ATCC 700699</strain>
    </source>
</reference>
<reference key="2">
    <citation type="journal article" date="2016" name="Science">
        <title>Biosynthesis of a broad-spectrum nicotianamine-like metallophore in Staphylococcus aureus.</title>
        <authorList>
            <person name="Ghssein G."/>
            <person name="Brutesco C."/>
            <person name="Ouerdane L."/>
            <person name="Fojcik C."/>
            <person name="Izaute A."/>
            <person name="Wang S."/>
            <person name="Hajjar C."/>
            <person name="Lobinski R."/>
            <person name="Lemaire D."/>
            <person name="Richaud P."/>
            <person name="Voulhoux R."/>
            <person name="Espaillat A."/>
            <person name="Cava F."/>
            <person name="Pignol D."/>
            <person name="Borezee-Durant E."/>
            <person name="Arnoux P."/>
        </authorList>
    </citation>
    <scope>FUNCTION</scope>
    <scope>SUBUNIT</scope>
    <scope>INDUCTION</scope>
    <scope>DISRUPTION PHENOTYPE</scope>
    <source>
        <strain>Mu50 / ATCC 700699</strain>
    </source>
</reference>
<dbReference type="EC" id="7.2.2.-" evidence="5"/>
<dbReference type="EMBL" id="BA000017">
    <property type="protein sequence ID" value="BAB58626.1"/>
    <property type="molecule type" value="Genomic_DNA"/>
</dbReference>
<dbReference type="RefSeq" id="WP_000173871.1">
    <property type="nucleotide sequence ID" value="NC_002758.2"/>
</dbReference>
<dbReference type="SMR" id="A0A0H3JXA3"/>
<dbReference type="KEGG" id="sav:SAV2464"/>
<dbReference type="HOGENOM" id="CLU_000604_1_23_9"/>
<dbReference type="PhylomeDB" id="A0A0H3JXA3"/>
<dbReference type="Proteomes" id="UP000002481">
    <property type="component" value="Chromosome"/>
</dbReference>
<dbReference type="GO" id="GO:0005886">
    <property type="term" value="C:plasma membrane"/>
    <property type="evidence" value="ECO:0007669"/>
    <property type="project" value="UniProtKB-SubCell"/>
</dbReference>
<dbReference type="GO" id="GO:0005524">
    <property type="term" value="F:ATP binding"/>
    <property type="evidence" value="ECO:0007669"/>
    <property type="project" value="UniProtKB-KW"/>
</dbReference>
<dbReference type="GO" id="GO:0016887">
    <property type="term" value="F:ATP hydrolysis activity"/>
    <property type="evidence" value="ECO:0007669"/>
    <property type="project" value="InterPro"/>
</dbReference>
<dbReference type="GO" id="GO:0006824">
    <property type="term" value="P:cobalt ion transport"/>
    <property type="evidence" value="ECO:0007669"/>
    <property type="project" value="UniProtKB-KW"/>
</dbReference>
<dbReference type="GO" id="GO:0006825">
    <property type="term" value="P:copper ion transport"/>
    <property type="evidence" value="ECO:0007669"/>
    <property type="project" value="UniProtKB-KW"/>
</dbReference>
<dbReference type="GO" id="GO:0006826">
    <property type="term" value="P:iron ion transport"/>
    <property type="evidence" value="ECO:0007669"/>
    <property type="project" value="UniProtKB-KW"/>
</dbReference>
<dbReference type="GO" id="GO:0015675">
    <property type="term" value="P:nickel cation transport"/>
    <property type="evidence" value="ECO:0007669"/>
    <property type="project" value="UniProtKB-KW"/>
</dbReference>
<dbReference type="GO" id="GO:0006829">
    <property type="term" value="P:zinc ion transport"/>
    <property type="evidence" value="ECO:0007669"/>
    <property type="project" value="UniProtKB-KW"/>
</dbReference>
<dbReference type="CDD" id="cd03257">
    <property type="entry name" value="ABC_NikE_OppD_transporters"/>
    <property type="match status" value="1"/>
</dbReference>
<dbReference type="FunFam" id="3.40.50.300:FF:002397">
    <property type="entry name" value="Oligopeptide ABC transporter, ATP-binding protein"/>
    <property type="match status" value="1"/>
</dbReference>
<dbReference type="Gene3D" id="3.40.50.300">
    <property type="entry name" value="P-loop containing nucleotide triphosphate hydrolases"/>
    <property type="match status" value="1"/>
</dbReference>
<dbReference type="InterPro" id="IPR003593">
    <property type="entry name" value="AAA+_ATPase"/>
</dbReference>
<dbReference type="InterPro" id="IPR050388">
    <property type="entry name" value="ABC_Ni/Peptide_Import"/>
</dbReference>
<dbReference type="InterPro" id="IPR003439">
    <property type="entry name" value="ABC_transporter-like_ATP-bd"/>
</dbReference>
<dbReference type="InterPro" id="IPR017871">
    <property type="entry name" value="ABC_transporter-like_CS"/>
</dbReference>
<dbReference type="InterPro" id="IPR027417">
    <property type="entry name" value="P-loop_NTPase"/>
</dbReference>
<dbReference type="NCBIfam" id="NF047578">
    <property type="entry name" value="opine_ATP_CntD"/>
    <property type="match status" value="1"/>
</dbReference>
<dbReference type="NCBIfam" id="NF047576">
    <property type="entry name" value="opine_ATP_CntF"/>
    <property type="match status" value="1"/>
</dbReference>
<dbReference type="PANTHER" id="PTHR43297:SF2">
    <property type="entry name" value="DIPEPTIDE TRANSPORT ATP-BINDING PROTEIN DPPD"/>
    <property type="match status" value="1"/>
</dbReference>
<dbReference type="PANTHER" id="PTHR43297">
    <property type="entry name" value="OLIGOPEPTIDE TRANSPORT ATP-BINDING PROTEIN APPD"/>
    <property type="match status" value="1"/>
</dbReference>
<dbReference type="Pfam" id="PF00005">
    <property type="entry name" value="ABC_tran"/>
    <property type="match status" value="1"/>
</dbReference>
<dbReference type="SMART" id="SM00382">
    <property type="entry name" value="AAA"/>
    <property type="match status" value="1"/>
</dbReference>
<dbReference type="SUPFAM" id="SSF52540">
    <property type="entry name" value="P-loop containing nucleoside triphosphate hydrolases"/>
    <property type="match status" value="1"/>
</dbReference>
<dbReference type="PROSITE" id="PS00211">
    <property type="entry name" value="ABC_TRANSPORTER_1"/>
    <property type="match status" value="1"/>
</dbReference>
<dbReference type="PROSITE" id="PS50893">
    <property type="entry name" value="ABC_TRANSPORTER_2"/>
    <property type="match status" value="1"/>
</dbReference>
<keyword id="KW-0067">ATP-binding</keyword>
<keyword id="KW-1003">Cell membrane</keyword>
<keyword id="KW-0170">Cobalt</keyword>
<keyword id="KW-0171">Cobalt transport</keyword>
<keyword id="KW-0186">Copper</keyword>
<keyword id="KW-0187">Copper transport</keyword>
<keyword id="KW-0406">Ion transport</keyword>
<keyword id="KW-0408">Iron</keyword>
<keyword id="KW-0410">Iron transport</keyword>
<keyword id="KW-0472">Membrane</keyword>
<keyword id="KW-0533">Nickel</keyword>
<keyword id="KW-0921">Nickel transport</keyword>
<keyword id="KW-0547">Nucleotide-binding</keyword>
<keyword id="KW-1278">Translocase</keyword>
<keyword id="KW-0813">Transport</keyword>
<keyword id="KW-0862">Zinc</keyword>
<keyword id="KW-0864">Zinc transport</keyword>
<gene>
    <name evidence="3" type="primary">cntD</name>
    <name evidence="6" type="ordered locus">SAV2464</name>
</gene>